<feature type="signal peptide" evidence="1">
    <location>
        <begin position="1"/>
        <end position="22"/>
    </location>
</feature>
<feature type="chain" id="PRO_0000025663" description="Major prion protein">
    <location>
        <begin position="23"/>
        <end position="230"/>
    </location>
</feature>
<feature type="propeptide" id="PRO_0000025664" description="Removed in mature form" evidence="1">
    <location>
        <begin position="231"/>
        <end position="253"/>
    </location>
</feature>
<feature type="repeat" description="1">
    <location>
        <begin position="51"/>
        <end position="59"/>
    </location>
</feature>
<feature type="repeat" description="2">
    <location>
        <begin position="60"/>
        <end position="67"/>
    </location>
</feature>
<feature type="repeat" description="3">
    <location>
        <begin position="68"/>
        <end position="75"/>
    </location>
</feature>
<feature type="repeat" description="4">
    <location>
        <begin position="76"/>
        <end position="83"/>
    </location>
</feature>
<feature type="repeat" description="5">
    <location>
        <begin position="84"/>
        <end position="91"/>
    </location>
</feature>
<feature type="region of interest" description="Interaction with GRB2, ERI3 and SYN1" evidence="4">
    <location>
        <begin position="23"/>
        <end position="230"/>
    </location>
</feature>
<feature type="region of interest" description="Interaction with ADGRG6" evidence="4">
    <location>
        <begin position="23"/>
        <end position="38"/>
    </location>
</feature>
<feature type="region of interest" description="Disordered" evidence="6">
    <location>
        <begin position="26"/>
        <end position="108"/>
    </location>
</feature>
<feature type="region of interest" description="5 X 8 AA tandem repeats of P-H-G-G-G-W-G-Q">
    <location>
        <begin position="51"/>
        <end position="91"/>
    </location>
</feature>
<feature type="compositionally biased region" description="Gly residues" evidence="6">
    <location>
        <begin position="52"/>
        <end position="95"/>
    </location>
</feature>
<feature type="binding site" evidence="2">
    <location>
        <position position="61"/>
    </location>
    <ligand>
        <name>Cu(2+)</name>
        <dbReference type="ChEBI" id="CHEBI:29036"/>
        <label>1</label>
    </ligand>
</feature>
<feature type="binding site" evidence="2">
    <location>
        <position position="62"/>
    </location>
    <ligand>
        <name>Cu(2+)</name>
        <dbReference type="ChEBI" id="CHEBI:29036"/>
        <label>1</label>
    </ligand>
</feature>
<feature type="binding site" evidence="2">
    <location>
        <position position="63"/>
    </location>
    <ligand>
        <name>Cu(2+)</name>
        <dbReference type="ChEBI" id="CHEBI:29036"/>
        <label>1</label>
    </ligand>
</feature>
<feature type="binding site" evidence="2">
    <location>
        <position position="69"/>
    </location>
    <ligand>
        <name>Cu(2+)</name>
        <dbReference type="ChEBI" id="CHEBI:29036"/>
        <label>2</label>
    </ligand>
</feature>
<feature type="binding site" evidence="2">
    <location>
        <position position="70"/>
    </location>
    <ligand>
        <name>Cu(2+)</name>
        <dbReference type="ChEBI" id="CHEBI:29036"/>
        <label>2</label>
    </ligand>
</feature>
<feature type="binding site" evidence="2">
    <location>
        <position position="71"/>
    </location>
    <ligand>
        <name>Cu(2+)</name>
        <dbReference type="ChEBI" id="CHEBI:29036"/>
        <label>2</label>
    </ligand>
</feature>
<feature type="binding site" evidence="2">
    <location>
        <position position="77"/>
    </location>
    <ligand>
        <name>Cu(2+)</name>
        <dbReference type="ChEBI" id="CHEBI:29036"/>
        <label>3</label>
    </ligand>
</feature>
<feature type="binding site" evidence="2">
    <location>
        <position position="78"/>
    </location>
    <ligand>
        <name>Cu(2+)</name>
        <dbReference type="ChEBI" id="CHEBI:29036"/>
        <label>3</label>
    </ligand>
</feature>
<feature type="binding site" evidence="2">
    <location>
        <position position="79"/>
    </location>
    <ligand>
        <name>Cu(2+)</name>
        <dbReference type="ChEBI" id="CHEBI:29036"/>
        <label>3</label>
    </ligand>
</feature>
<feature type="binding site" evidence="2">
    <location>
        <position position="85"/>
    </location>
    <ligand>
        <name>Cu(2+)</name>
        <dbReference type="ChEBI" id="CHEBI:29036"/>
        <label>4</label>
    </ligand>
</feature>
<feature type="binding site" evidence="2">
    <location>
        <position position="86"/>
    </location>
    <ligand>
        <name>Cu(2+)</name>
        <dbReference type="ChEBI" id="CHEBI:29036"/>
        <label>4</label>
    </ligand>
</feature>
<feature type="binding site" evidence="2">
    <location>
        <position position="87"/>
    </location>
    <ligand>
        <name>Cu(2+)</name>
        <dbReference type="ChEBI" id="CHEBI:29036"/>
        <label>4</label>
    </ligand>
</feature>
<feature type="lipid moiety-binding region" description="GPI-anchor amidated serine" evidence="3">
    <location>
        <position position="230"/>
    </location>
</feature>
<feature type="glycosylation site" description="N-linked (GlcNAc...) asparagine" evidence="5">
    <location>
        <position position="181"/>
    </location>
</feature>
<feature type="glycosylation site" description="N-linked (GlcNAc...) asparagine" evidence="5">
    <location>
        <position position="197"/>
    </location>
</feature>
<feature type="disulfide bond" evidence="3">
    <location>
        <begin position="179"/>
        <end position="214"/>
    </location>
</feature>
<organism>
    <name type="scientific">Colobus guereza</name>
    <name type="common">Mantled guereza</name>
    <name type="synonym">Eastern black-and-white colobus monkey</name>
    <dbReference type="NCBI Taxonomy" id="33548"/>
    <lineage>
        <taxon>Eukaryota</taxon>
        <taxon>Metazoa</taxon>
        <taxon>Chordata</taxon>
        <taxon>Craniata</taxon>
        <taxon>Vertebrata</taxon>
        <taxon>Euteleostomi</taxon>
        <taxon>Mammalia</taxon>
        <taxon>Eutheria</taxon>
        <taxon>Euarchontoglires</taxon>
        <taxon>Primates</taxon>
        <taxon>Haplorrhini</taxon>
        <taxon>Catarrhini</taxon>
        <taxon>Cercopithecidae</taxon>
        <taxon>Colobinae</taxon>
        <taxon>Colobus</taxon>
    </lineage>
</organism>
<name>PRIO_COLGU</name>
<reference key="1">
    <citation type="journal article" date="1995" name="J. Mol. Biol.">
        <title>Prion protein gene variation among primates.</title>
        <authorList>
            <person name="Schaetzl H.M."/>
            <person name="Da Costa M."/>
            <person name="Taylor L."/>
            <person name="Cohen F.E."/>
            <person name="Prusiner S.B."/>
        </authorList>
    </citation>
    <scope>NUCLEOTIDE SEQUENCE [GENOMIC DNA]</scope>
</reference>
<reference key="2">
    <citation type="submission" date="1996-10" db="EMBL/GenBank/DDBJ databases">
        <title>Evidence for an increased substitution rate of the hominoid prion protein gene during the period of brain expansion.</title>
        <authorList>
            <person name="van der Kuyl A.C."/>
            <person name="Dekker J.T."/>
            <person name="Goudsmit J."/>
        </authorList>
    </citation>
    <scope>NUCLEOTIDE SEQUENCE [GENOMIC DNA] OF 8-253</scope>
</reference>
<sequence>MANLGCWMLVLFVATWSDLGLCKKRPKPGGWNTGGSRYPGQGSPGGNRYPPQGGGGWGQPHGGGWGQPHGGGWGQPHGGGWGQPHGGGWGQGGGTHSQWNKPSKPKTSMKHMAGAAAAGAVVGGLGGYMLGSAMSRPLIHFGNDYEDRYYRENMYRYPNQVYYRPVDQYSNQNNFVHDCVNITIKQHTVTTTTKGENFTETDVKMMERVVEQMCITQYEKESQAYYQRGSSMVLFSSPPVILLISFLIFLIVG</sequence>
<evidence type="ECO:0000250" key="1"/>
<evidence type="ECO:0000250" key="2">
    <source>
        <dbReference type="UniProtKB" id="P04156"/>
    </source>
</evidence>
<evidence type="ECO:0000250" key="3">
    <source>
        <dbReference type="UniProtKB" id="P04273"/>
    </source>
</evidence>
<evidence type="ECO:0000250" key="4">
    <source>
        <dbReference type="UniProtKB" id="P04925"/>
    </source>
</evidence>
<evidence type="ECO:0000255" key="5"/>
<evidence type="ECO:0000256" key="6">
    <source>
        <dbReference type="SAM" id="MobiDB-lite"/>
    </source>
</evidence>
<evidence type="ECO:0000305" key="7"/>
<gene>
    <name type="primary">PRNP</name>
    <name type="synonym">PRP</name>
</gene>
<accession>P40251</accession>
<proteinExistence type="inferred from homology"/>
<protein>
    <recommendedName>
        <fullName>Major prion protein</fullName>
        <shortName>PrP</shortName>
    </recommendedName>
    <alternativeName>
        <fullName>PrP27-30</fullName>
    </alternativeName>
    <alternativeName>
        <fullName>PrP33-35C</fullName>
    </alternativeName>
    <cdAntigenName>CD230</cdAntigenName>
</protein>
<comment type="function">
    <text evidence="2 4">Its primary physiological function is unclear. May play a role in neuronal development and synaptic plasticity. May be required for neuronal myelin sheath maintenance. May promote myelin homeostasis through acting as an agonist for ADGRG6 receptor. May play a role in iron uptake and iron homeostasis. Soluble oligomers are toxic to cultured neuroblastoma cells and induce apoptosis (in vitro) (By similarity). Association with GPC1 (via its heparan sulfate chains) targets PRNP to lipid rafts. Also provides Cu(2+) or Zn(2+) for the ascorbate-mediated GPC1 deaminase degradation of its heparan sulfate side chains (By similarity).</text>
</comment>
<comment type="subunit">
    <text evidence="2 4">Monomer and homodimer. Has a tendency to aggregate into amyloid fibrils containing a cross-beta spine, formed by a steric zipper of superposed beta-strands. Soluble oligomers may represent an intermediate stage on the path to fibril formation. Copper binding may promote oligomerization. Interacts with GRB2, APP, ERI3/PRNPIP and SYN1 (By similarity). Mislocalized cytosolically exposed PrP interacts with MGRN1; this interaction alters MGRN1 subcellular location and causes lysosomal enlargement (By similarity). Interacts with APP. Interacts with KIAA1191 (By similarity). Interacts with ADGRG6 (By similarity).</text>
</comment>
<comment type="subcellular location">
    <subcellularLocation>
        <location evidence="2">Cell membrane</location>
        <topology evidence="2">Lipid-anchor</topology>
        <topology evidence="2">GPI-anchor</topology>
    </subcellularLocation>
    <subcellularLocation>
        <location evidence="4">Golgi apparatus</location>
    </subcellularLocation>
    <text evidence="2">Targeted to lipid rafts via association with the heparan sulfate chains of GPC1. Colocates, in the presence of Cu(2+), to vesicles in para- and perinuclear regions, where both proteins undergo internalization. Heparin displaces PRNP from lipid rafts and promotes endocytosis.</text>
</comment>
<comment type="domain">
    <text evidence="2">The normal, monomeric form has a mainly alpha-helical structure. The disease-associated, protease-resistant form forms amyloid fibrils containing a cross-beta spine, formed by a steric zipper of superposed beta-strands. Disease mutations may favor intermolecular contacts via short beta strands, and may thereby trigger oligomerization.</text>
</comment>
<comment type="domain">
    <text evidence="2">Contains an N-terminal region composed of octamer repeats. At low copper concentrations, the sidechains of His residues from three or four repeats contribute to the binding of a single copper ion. Alternatively, a copper ion can be bound by interaction with the sidechain and backbone amide nitrogen of a single His residue. The observed copper binding stoichiometry suggests that two repeat regions cooperate to stabilize the binding of a single copper ion. At higher copper concentrations, each octamer can bind one copper ion by interactions with the His sidechain and Gly backbone atoms. A mixture of binding types may occur, especially in the case of octamer repeat expansion. Copper binding may stabilize the conformation of this region and may promote oligomerization.</text>
</comment>
<comment type="disease">
    <text evidence="7">PrP is found in high quantity in the brain of humans and animals infected with the degenerative neurological diseases kuru, Creutzfeldt-Jakob disease (CJD), Gerstmann-Straussler syndrome (GSS), scrapie, bovine spongiform encephalopathy (BSE), transmissible mink encephalopathy (TME), etc.</text>
</comment>
<comment type="similarity">
    <text evidence="7">Belongs to the prion family.</text>
</comment>
<keyword id="KW-0034">Amyloid</keyword>
<keyword id="KW-1003">Cell membrane</keyword>
<keyword id="KW-0186">Copper</keyword>
<keyword id="KW-1015">Disulfide bond</keyword>
<keyword id="KW-0325">Glycoprotein</keyword>
<keyword id="KW-0333">Golgi apparatus</keyword>
<keyword id="KW-0336">GPI-anchor</keyword>
<keyword id="KW-0449">Lipoprotein</keyword>
<keyword id="KW-0472">Membrane</keyword>
<keyword id="KW-0479">Metal-binding</keyword>
<keyword id="KW-0640">Prion</keyword>
<keyword id="KW-0677">Repeat</keyword>
<keyword id="KW-0732">Signal</keyword>
<keyword id="KW-0862">Zinc</keyword>
<dbReference type="EMBL" id="U08297">
    <property type="protein sequence ID" value="AAC50086.1"/>
    <property type="molecule type" value="Genomic_DNA"/>
</dbReference>
<dbReference type="EMBL" id="U75389">
    <property type="protein sequence ID" value="AAB50624.1"/>
    <property type="molecule type" value="Genomic_DNA"/>
</dbReference>
<dbReference type="PIR" id="S53618">
    <property type="entry name" value="S53618"/>
</dbReference>
<dbReference type="SMR" id="P40251"/>
<dbReference type="GlyCosmos" id="P40251">
    <property type="glycosylation" value="2 sites, No reported glycans"/>
</dbReference>
<dbReference type="GO" id="GO:0005794">
    <property type="term" value="C:Golgi apparatus"/>
    <property type="evidence" value="ECO:0007669"/>
    <property type="project" value="UniProtKB-SubCell"/>
</dbReference>
<dbReference type="GO" id="GO:0005886">
    <property type="term" value="C:plasma membrane"/>
    <property type="evidence" value="ECO:0007669"/>
    <property type="project" value="UniProtKB-SubCell"/>
</dbReference>
<dbReference type="GO" id="GO:0098552">
    <property type="term" value="C:side of membrane"/>
    <property type="evidence" value="ECO:0007669"/>
    <property type="project" value="UniProtKB-KW"/>
</dbReference>
<dbReference type="GO" id="GO:0005507">
    <property type="term" value="F:copper ion binding"/>
    <property type="evidence" value="ECO:0000250"/>
    <property type="project" value="UniProtKB"/>
</dbReference>
<dbReference type="GO" id="GO:0051260">
    <property type="term" value="P:protein homooligomerization"/>
    <property type="evidence" value="ECO:0007669"/>
    <property type="project" value="InterPro"/>
</dbReference>
<dbReference type="FunFam" id="1.10.790.10:FF:000001">
    <property type="entry name" value="Major prion protein"/>
    <property type="match status" value="1"/>
</dbReference>
<dbReference type="Gene3D" id="1.10.790.10">
    <property type="entry name" value="Prion/Doppel protein, beta-ribbon domain"/>
    <property type="match status" value="1"/>
</dbReference>
<dbReference type="InterPro" id="IPR000817">
    <property type="entry name" value="Prion"/>
</dbReference>
<dbReference type="InterPro" id="IPR036924">
    <property type="entry name" value="Prion/Doppel_b-ribbon_dom_sf"/>
</dbReference>
<dbReference type="InterPro" id="IPR022416">
    <property type="entry name" value="Prion/Doppel_prot_b-ribbon_dom"/>
</dbReference>
<dbReference type="InterPro" id="IPR020949">
    <property type="entry name" value="Prion_copper_b_octapeptide"/>
</dbReference>
<dbReference type="InterPro" id="IPR025860">
    <property type="entry name" value="Prion_N"/>
</dbReference>
<dbReference type="PANTHER" id="PTHR15506">
    <property type="entry name" value="DOPPEL PRION"/>
    <property type="match status" value="1"/>
</dbReference>
<dbReference type="PANTHER" id="PTHR15506:SF2">
    <property type="entry name" value="MAJOR PRION PROTEIN"/>
    <property type="match status" value="1"/>
</dbReference>
<dbReference type="Pfam" id="PF00377">
    <property type="entry name" value="Prion"/>
    <property type="match status" value="1"/>
</dbReference>
<dbReference type="Pfam" id="PF11587">
    <property type="entry name" value="Prion_bPrPp"/>
    <property type="match status" value="1"/>
</dbReference>
<dbReference type="Pfam" id="PF03991">
    <property type="entry name" value="Prion_octapep"/>
    <property type="match status" value="1"/>
</dbReference>
<dbReference type="PRINTS" id="PR00341">
    <property type="entry name" value="PRION"/>
</dbReference>
<dbReference type="SMART" id="SM00157">
    <property type="entry name" value="PRP"/>
    <property type="match status" value="1"/>
</dbReference>
<dbReference type="SUPFAM" id="SSF54098">
    <property type="entry name" value="Prion-like"/>
    <property type="match status" value="1"/>
</dbReference>
<dbReference type="PROSITE" id="PS00291">
    <property type="entry name" value="PRION_1"/>
    <property type="match status" value="1"/>
</dbReference>
<dbReference type="PROSITE" id="PS00706">
    <property type="entry name" value="PRION_2"/>
    <property type="match status" value="1"/>
</dbReference>